<name>IHFB_ALISL</name>
<organism>
    <name type="scientific">Aliivibrio salmonicida (strain LFI1238)</name>
    <name type="common">Vibrio salmonicida (strain LFI1238)</name>
    <dbReference type="NCBI Taxonomy" id="316275"/>
    <lineage>
        <taxon>Bacteria</taxon>
        <taxon>Pseudomonadati</taxon>
        <taxon>Pseudomonadota</taxon>
        <taxon>Gammaproteobacteria</taxon>
        <taxon>Vibrionales</taxon>
        <taxon>Vibrionaceae</taxon>
        <taxon>Aliivibrio</taxon>
    </lineage>
</organism>
<proteinExistence type="inferred from homology"/>
<comment type="function">
    <text evidence="1">This protein is one of the two subunits of integration host factor, a specific DNA-binding protein that functions in genetic recombination as well as in transcriptional and translational control.</text>
</comment>
<comment type="subunit">
    <text evidence="1">Heterodimer of an alpha and a beta chain.</text>
</comment>
<comment type="similarity">
    <text evidence="1">Belongs to the bacterial histone-like protein family.</text>
</comment>
<feature type="chain" id="PRO_1000122182" description="Integration host factor subunit beta">
    <location>
        <begin position="1"/>
        <end position="93"/>
    </location>
</feature>
<protein>
    <recommendedName>
        <fullName evidence="1">Integration host factor subunit beta</fullName>
        <shortName evidence="1">IHF-beta</shortName>
    </recommendedName>
</protein>
<reference key="1">
    <citation type="journal article" date="2008" name="BMC Genomics">
        <title>The genome sequence of the fish pathogen Aliivibrio salmonicida strain LFI1238 shows extensive evidence of gene decay.</title>
        <authorList>
            <person name="Hjerde E."/>
            <person name="Lorentzen M.S."/>
            <person name="Holden M.T."/>
            <person name="Seeger K."/>
            <person name="Paulsen S."/>
            <person name="Bason N."/>
            <person name="Churcher C."/>
            <person name="Harris D."/>
            <person name="Norbertczak H."/>
            <person name="Quail M.A."/>
            <person name="Sanders S."/>
            <person name="Thurston S."/>
            <person name="Parkhill J."/>
            <person name="Willassen N.P."/>
            <person name="Thomson N.R."/>
        </authorList>
    </citation>
    <scope>NUCLEOTIDE SEQUENCE [LARGE SCALE GENOMIC DNA]</scope>
    <source>
        <strain>LFI1238</strain>
    </source>
</reference>
<keyword id="KW-0233">DNA recombination</keyword>
<keyword id="KW-0238">DNA-binding</keyword>
<keyword id="KW-0804">Transcription</keyword>
<keyword id="KW-0805">Transcription regulation</keyword>
<keyword id="KW-0810">Translation regulation</keyword>
<gene>
    <name evidence="1" type="primary">ihfB</name>
    <name evidence="1" type="synonym">himD</name>
    <name type="ordered locus">VSAL_I2222</name>
</gene>
<dbReference type="EMBL" id="FM178379">
    <property type="protein sequence ID" value="CAQ79906.1"/>
    <property type="molecule type" value="Genomic_DNA"/>
</dbReference>
<dbReference type="RefSeq" id="WP_012550736.1">
    <property type="nucleotide sequence ID" value="NC_011312.1"/>
</dbReference>
<dbReference type="SMR" id="B6EIY1"/>
<dbReference type="KEGG" id="vsa:VSAL_I2222"/>
<dbReference type="eggNOG" id="COG0776">
    <property type="taxonomic scope" value="Bacteria"/>
</dbReference>
<dbReference type="HOGENOM" id="CLU_105066_2_0_6"/>
<dbReference type="Proteomes" id="UP000001730">
    <property type="component" value="Chromosome 1"/>
</dbReference>
<dbReference type="GO" id="GO:0005694">
    <property type="term" value="C:chromosome"/>
    <property type="evidence" value="ECO:0007669"/>
    <property type="project" value="InterPro"/>
</dbReference>
<dbReference type="GO" id="GO:0005829">
    <property type="term" value="C:cytosol"/>
    <property type="evidence" value="ECO:0007669"/>
    <property type="project" value="TreeGrafter"/>
</dbReference>
<dbReference type="GO" id="GO:0003677">
    <property type="term" value="F:DNA binding"/>
    <property type="evidence" value="ECO:0007669"/>
    <property type="project" value="UniProtKB-UniRule"/>
</dbReference>
<dbReference type="GO" id="GO:0030527">
    <property type="term" value="F:structural constituent of chromatin"/>
    <property type="evidence" value="ECO:0007669"/>
    <property type="project" value="InterPro"/>
</dbReference>
<dbReference type="GO" id="GO:0006310">
    <property type="term" value="P:DNA recombination"/>
    <property type="evidence" value="ECO:0007669"/>
    <property type="project" value="UniProtKB-UniRule"/>
</dbReference>
<dbReference type="GO" id="GO:0006355">
    <property type="term" value="P:regulation of DNA-templated transcription"/>
    <property type="evidence" value="ECO:0007669"/>
    <property type="project" value="UniProtKB-UniRule"/>
</dbReference>
<dbReference type="GO" id="GO:0006417">
    <property type="term" value="P:regulation of translation"/>
    <property type="evidence" value="ECO:0007669"/>
    <property type="project" value="UniProtKB-UniRule"/>
</dbReference>
<dbReference type="CDD" id="cd13836">
    <property type="entry name" value="IHF_B"/>
    <property type="match status" value="1"/>
</dbReference>
<dbReference type="FunFam" id="4.10.520.10:FF:000003">
    <property type="entry name" value="Integration host factor subunit beta"/>
    <property type="match status" value="1"/>
</dbReference>
<dbReference type="Gene3D" id="4.10.520.10">
    <property type="entry name" value="IHF-like DNA-binding proteins"/>
    <property type="match status" value="1"/>
</dbReference>
<dbReference type="HAMAP" id="MF_00381">
    <property type="entry name" value="IHF_beta"/>
    <property type="match status" value="1"/>
</dbReference>
<dbReference type="InterPro" id="IPR000119">
    <property type="entry name" value="Hist_DNA-bd"/>
</dbReference>
<dbReference type="InterPro" id="IPR020816">
    <property type="entry name" value="Histone-like_DNA-bd_CS"/>
</dbReference>
<dbReference type="InterPro" id="IPR010992">
    <property type="entry name" value="IHF-like_DNA-bd_dom_sf"/>
</dbReference>
<dbReference type="InterPro" id="IPR005685">
    <property type="entry name" value="IHF_beta"/>
</dbReference>
<dbReference type="NCBIfam" id="TIGR00988">
    <property type="entry name" value="hip"/>
    <property type="match status" value="1"/>
</dbReference>
<dbReference type="NCBIfam" id="NF001222">
    <property type="entry name" value="PRK00199.1"/>
    <property type="match status" value="1"/>
</dbReference>
<dbReference type="PANTHER" id="PTHR33175">
    <property type="entry name" value="DNA-BINDING PROTEIN HU"/>
    <property type="match status" value="1"/>
</dbReference>
<dbReference type="PANTHER" id="PTHR33175:SF5">
    <property type="entry name" value="INTEGRATION HOST FACTOR SUBUNIT BETA"/>
    <property type="match status" value="1"/>
</dbReference>
<dbReference type="Pfam" id="PF00216">
    <property type="entry name" value="Bac_DNA_binding"/>
    <property type="match status" value="1"/>
</dbReference>
<dbReference type="PRINTS" id="PR01727">
    <property type="entry name" value="DNABINDINGHU"/>
</dbReference>
<dbReference type="SMART" id="SM00411">
    <property type="entry name" value="BHL"/>
    <property type="match status" value="1"/>
</dbReference>
<dbReference type="SUPFAM" id="SSF47729">
    <property type="entry name" value="IHF-like DNA-binding proteins"/>
    <property type="match status" value="1"/>
</dbReference>
<dbReference type="PROSITE" id="PS00045">
    <property type="entry name" value="HISTONE_LIKE"/>
    <property type="match status" value="1"/>
</dbReference>
<accession>B6EIY1</accession>
<evidence type="ECO:0000255" key="1">
    <source>
        <dbReference type="HAMAP-Rule" id="MF_00381"/>
    </source>
</evidence>
<sequence length="93" mass="10618">MTKSELIEQLCSKKPQLSAKQVEDTVKEVLEQMATTLEGGDRIEIRGFGSFSLHYREPRLGRNPKTGDKVELDGKFVPHFKPGKELRERVNFS</sequence>